<sequence length="207" mass="23520">MTSRKKVLLKVIILGDSGVGKTSLMNQYVNKKFSNQYKATIGADFLTKEVMVDDRLVTMQIWDTAGQERFQSLGVAFYRGADCCVLVFDVTAPNTFKTLDSWRDEFLIQASPRDPENFPFVVLGNKIDLENRQVATKRAQAWCYSKNNIPYFETSAKEAINVEQAFQTIARNALKQETEVELYNEFPEPIKLDKNDRAKTSAESCSC</sequence>
<organism>
    <name type="scientific">Canis lupus familiaris</name>
    <name type="common">Dog</name>
    <name type="synonym">Canis familiaris</name>
    <dbReference type="NCBI Taxonomy" id="9615"/>
    <lineage>
        <taxon>Eukaryota</taxon>
        <taxon>Metazoa</taxon>
        <taxon>Chordata</taxon>
        <taxon>Craniata</taxon>
        <taxon>Vertebrata</taxon>
        <taxon>Euteleostomi</taxon>
        <taxon>Mammalia</taxon>
        <taxon>Eutheria</taxon>
        <taxon>Laurasiatheria</taxon>
        <taxon>Carnivora</taxon>
        <taxon>Caniformia</taxon>
        <taxon>Canidae</taxon>
        <taxon>Canis</taxon>
    </lineage>
</organism>
<evidence type="ECO:0000250" key="1"/>
<evidence type="ECO:0000250" key="2">
    <source>
        <dbReference type="UniProtKB" id="P09527"/>
    </source>
</evidence>
<evidence type="ECO:0000250" key="3">
    <source>
        <dbReference type="UniProtKB" id="P51149"/>
    </source>
</evidence>
<evidence type="ECO:0000250" key="4">
    <source>
        <dbReference type="UniProtKB" id="P51150"/>
    </source>
</evidence>
<evidence type="ECO:0000269" key="5">
    <source>
    </source>
</evidence>
<evidence type="ECO:0000269" key="6">
    <source>
    </source>
</evidence>
<evidence type="ECO:0000269" key="7">
    <source>
    </source>
</evidence>
<evidence type="ECO:0000305" key="8"/>
<keyword id="KW-0007">Acetylation</keyword>
<keyword id="KW-0072">Autophagy</keyword>
<keyword id="KW-0968">Cytoplasmic vesicle</keyword>
<keyword id="KW-0967">Endosome</keyword>
<keyword id="KW-0342">GTP-binding</keyword>
<keyword id="KW-0378">Hydrolase</keyword>
<keyword id="KW-1017">Isopeptide bond</keyword>
<keyword id="KW-0442">Lipid degradation</keyword>
<keyword id="KW-0551">Lipid droplet</keyword>
<keyword id="KW-0443">Lipid metabolism</keyword>
<keyword id="KW-0449">Lipoprotein</keyword>
<keyword id="KW-0458">Lysosome</keyword>
<keyword id="KW-0460">Magnesium</keyword>
<keyword id="KW-0472">Membrane</keyword>
<keyword id="KW-0479">Metal-binding</keyword>
<keyword id="KW-0488">Methylation</keyword>
<keyword id="KW-0496">Mitochondrion</keyword>
<keyword id="KW-0547">Nucleotide-binding</keyword>
<keyword id="KW-0597">Phosphoprotein</keyword>
<keyword id="KW-0636">Prenylation</keyword>
<keyword id="KW-0653">Protein transport</keyword>
<keyword id="KW-1185">Reference proteome</keyword>
<keyword id="KW-0813">Transport</keyword>
<keyword id="KW-0832">Ubl conjugation</keyword>
<reference key="1">
    <citation type="journal article" date="1990" name="Cell">
        <title>Localization of low molecular weight GTP binding proteins to exocytic and endocytic compartments.</title>
        <authorList>
            <person name="Chavrier P."/>
            <person name="Parton R.G."/>
            <person name="Hauri H.P."/>
            <person name="Simons K."/>
            <person name="Zerial M."/>
        </authorList>
    </citation>
    <scope>NUCLEOTIDE SEQUENCE [MRNA]</scope>
</reference>
<reference key="2">
    <citation type="journal article" date="1990" name="Mol. Cell. Biol.">
        <title>Molecular cloning of YPT1/SEC4-related cDNAs from an epithelial cell line.</title>
        <authorList>
            <person name="Chavrier P."/>
            <person name="Vingron M."/>
            <person name="Sander C."/>
            <person name="Simons K."/>
            <person name="Zerial M."/>
        </authorList>
    </citation>
    <scope>NUCLEOTIDE SEQUENCE [MRNA]</scope>
    <source>
        <strain>Cocker spaniel</strain>
        <tissue>Kidney</tissue>
    </source>
</reference>
<reference key="3">
    <citation type="journal article" date="1995" name="J. Cell Biol.">
        <title>Rab 7: an important regulator of late endocytic membrane traffic.</title>
        <authorList>
            <person name="Feng Y."/>
            <person name="Press B."/>
            <person name="Wandinger-Ness A."/>
        </authorList>
    </citation>
    <scope>FUNCTION</scope>
</reference>
<reference key="4">
    <citation type="journal article" date="1998" name="J. Cell Biol.">
        <title>Mutant Rab7 causes the accumulation of cathepsin D and cation-independent mannose 6-phosphate receptor in an early endocytic compartment.</title>
        <authorList>
            <person name="Press B."/>
            <person name="Feng Y."/>
            <person name="Hoflack B."/>
            <person name="Wandinger-Ness A."/>
        </authorList>
    </citation>
    <scope>FUNCTION</scope>
</reference>
<reference key="5">
    <citation type="journal article" date="2006" name="J. Biol. Chem.">
        <title>rab7 activity affects epidermal growth factor:epidermal growth factor receptor degradation by regulating endocytic trafficking from the late endosome.</title>
        <authorList>
            <person name="Ceresa B.P."/>
            <person name="Bahr S.J."/>
        </authorList>
    </citation>
    <scope>FUNCTION</scope>
</reference>
<comment type="function">
    <text evidence="3 4 5 6 7">The small GTPases Rab are key regulators of intracellular membrane trafficking, from the formation of transport vesicles to their fusion with membranes. Rabs cycle between an inactive GDP-bound form and an active GTP-bound form that is able to recruit to membranes different sets of downstream effectors directly responsible for vesicle formation, movement, tethering and fusion. In its active state, RAB7A binds to a variety of effector proteins playing a key role in the regulation of endo-lysosomal trafficking. Governs early-to-late endosomal maturation, microtubule minus-end as well as plus-end directed endosomal migration and positioning, and endosome-lysosome transport through different protein-protein interaction cascades (By similarity). Also plays a central role in growth-factor-mediated cell signaling, nutrient-transporter-mediated nutrient uptake, neurotrophin transport in the axons of neurons and lipid metabolism (By similarity). Also involved in regulation of some specialized endosomal membrane trafficking, such as maturation of melanosomes, pathogen-induced phagosomes (or vacuoles) and autophagosomes (By similarity). Plays a role in the maturation and acidification of phagosomes that engulf pathogens, such as S.aureus and Mycobacteria (By similarity). Plays a role in the fusion of phagosomes with lysosomes (By similarity). In concert with RAC1, plays a role in regulating the formation of RBs (ruffled borders) in osteoclasts (By similarity). Controls the endosomal trafficking and neurite outgrowth signaling of NTRK1/TRKA (By similarity). Regulates the endocytic trafficking of the EGF-EGFR complex by regulating its lysosomal degradation (By similarity). Involved in the ADRB2-stimulated lipolysis through lipophagy, a cytosolic lipase-independent autophagic pathway. Required for the exosomal release of SDCBP, CD63 and syndecan (By similarity). Required for vesicular trafficking and cell surface expression of ACE2 (By similarity). May play a role in PRPH neuronal intermediate filament assembly (By similarity).</text>
</comment>
<comment type="catalytic activity">
    <reaction evidence="3">
        <text>GTP + H2O = GDP + phosphate + H(+)</text>
        <dbReference type="Rhea" id="RHEA:19669"/>
        <dbReference type="ChEBI" id="CHEBI:15377"/>
        <dbReference type="ChEBI" id="CHEBI:15378"/>
        <dbReference type="ChEBI" id="CHEBI:37565"/>
        <dbReference type="ChEBI" id="CHEBI:43474"/>
        <dbReference type="ChEBI" id="CHEBI:58189"/>
        <dbReference type="EC" id="3.6.5.2"/>
    </reaction>
    <physiologicalReaction direction="left-to-right" evidence="3">
        <dbReference type="Rhea" id="RHEA:19670"/>
    </physiologicalReaction>
</comment>
<comment type="cofactor">
    <cofactor evidence="3">
        <name>Mg(2+)</name>
        <dbReference type="ChEBI" id="CHEBI:18420"/>
    </cofactor>
</comment>
<comment type="activity regulation">
    <text evidence="3">Regulated by guanine nucleotide exchange factors (GEFs) which promote the exchange of bound GDP for free GTP. Regulated by GTPase activating proteins (GAPs) which increase the GTP hydrolysis activity. Inhibited by GDP dissociation inhibitors (GDIs).</text>
</comment>
<comment type="subunit">
    <text evidence="2 3 4">Interacts with NTRK1/TRKA (By similarity). Interacts with RILP (By similarity). Interacts with PSMA7 (By similarity). Interacts with RNF115 (By similarity). Interacts with FYCO1 (By similarity). Interacts with the PIK3C3/VPS34-PIK3R4 complex (By similarity). The GTP-bound form interacts with OSBPL1A (By similarity). The GTP-bound form interacts with RAC1 (By similarity). Interacts with CLN3 (By similarity). Interacts with CHM, the substrate-binding subunit of the Rab geranylgeranyltransferase complex (By similarity). Interacts with C9orf72. Does not interact with HPS4 and the BLOC-3 complex (heterodimer of HPS1 and HPS4). Interacts with CLN5 (By similarity). Interacts with PLEKHM1 (via N- and C-terminus) (By similarity). Interacts with PRPH; the interaction is direct (By similarity). Interacts with VPS13A (By similarity). The GDP-bound form interacts with RIMOC1 (By similarity). Interacts with the MON1A-CCZ1B complex and this interaction is enhanced in the presence of RIMOC1 (By similarity). Interacts with VPS39 and VPS41 (By similarity). Forms a ternary complex with LAMP2 and RUFY4; the interaction with LAMP2 is mediated by RUFY4 (via RUN and coiled coil domains) (By similarity).</text>
</comment>
<comment type="interaction">
    <interactant intactId="EBI-7991906">
        <id>P18067</id>
    </interactant>
    <interactant intactId="EBI-473814">
        <id>Q9Y4G2</id>
        <label>PLEKHM1</label>
    </interactant>
    <organismsDiffer>true</organismsDiffer>
    <experiments>9</experiments>
</comment>
<comment type="interaction">
    <interactant intactId="EBI-7991906">
        <id>P18067</id>
    </interactant>
    <interactant intactId="EBI-16152863">
        <id>Q5T4F4-1</id>
        <label>ZFYVE27</label>
    </interactant>
    <organismsDiffer>true</organismsDiffer>
    <experiments>2</experiments>
</comment>
<comment type="subcellular location">
    <subcellularLocation>
        <location evidence="3">Cytoplasmic vesicle</location>
        <location evidence="3">Phagosome membrane</location>
        <topology evidence="8">Peripheral membrane protein</topology>
        <orientation evidence="8">Cytoplasmic side</orientation>
    </subcellularLocation>
    <subcellularLocation>
        <location evidence="3">Late endosome membrane</location>
        <topology evidence="8">Peripheral membrane protein</topology>
        <orientation evidence="8">Cytoplasmic side</orientation>
    </subcellularLocation>
    <subcellularLocation>
        <location evidence="3">Lysosome membrane</location>
        <topology evidence="8">Peripheral membrane protein</topology>
        <orientation evidence="8">Cytoplasmic side</orientation>
    </subcellularLocation>
    <subcellularLocation>
        <location evidence="3">Melanosome membrane</location>
        <topology evidence="8">Peripheral membrane protein</topology>
        <orientation evidence="8">Cytoplasmic side</orientation>
    </subcellularLocation>
    <subcellularLocation>
        <location evidence="3">Cytoplasmic vesicle</location>
        <location evidence="3">Autophagosome membrane</location>
        <topology evidence="8">Peripheral membrane protein</topology>
        <orientation evidence="8">Cytoplasmic side</orientation>
    </subcellularLocation>
    <subcellularLocation>
        <location evidence="4">Lipid droplet</location>
    </subcellularLocation>
    <subcellularLocation>
        <location evidence="3">Endosome membrane</location>
    </subcellularLocation>
    <subcellularLocation>
        <location evidence="4">Cytoplasmic vesicle</location>
    </subcellularLocation>
    <subcellularLocation>
        <location evidence="3">Mitochondrion membrane</location>
        <topology evidence="8">Peripheral membrane protein</topology>
    </subcellularLocation>
    <text evidence="3 4">Colocalizes with OSBPL1A at the late endosome. Found in the ruffled border (a late endosomal-like compartment in the plasma membrane) of bone-resorbing osteoclasts. Recruited to phagosomes containing S.aureus or Mycobacterium. Lipid droplet localization is increased upon ADRB2 stimulation. Recruited to damaged mitochondria during mitophagy in a RIMOC1-dependent manner.</text>
</comment>
<comment type="domain">
    <text evidence="3">Switch I, switch II and the interswitch regions are characteristic of Rab GTPases and mediate the interactions with Rab downstream effectors. The switch regions undergo conformational changes upon nucleotide binding which drive interaction with specific sets of effector proteins, with most effectors only binding to GTP-bound Rab.</text>
</comment>
<comment type="PTM">
    <text evidence="3">Deubiquitination at Lys-191 and Lys-194 by USP32.</text>
</comment>
<comment type="PTM">
    <text evidence="3">Phosphorylated at Ser-72 by LRRK1; phosphorylation is dependent on protein kinase C (PKC) activation of LRRK1.</text>
</comment>
<comment type="PTM">
    <text evidence="3">Prenylated. Prenylation is required for association with cellular membranes.</text>
</comment>
<comment type="similarity">
    <text evidence="8">Belongs to the small GTPase superfamily. Rab family.</text>
</comment>
<feature type="initiator methionine" description="Removed" evidence="3">
    <location>
        <position position="1"/>
    </location>
</feature>
<feature type="chain" id="PRO_0000121120" description="Ras-related protein Rab-7a">
    <location>
        <begin position="2"/>
        <end position="207"/>
    </location>
</feature>
<feature type="short sequence motif" description="Switch 1" evidence="3">
    <location>
        <begin position="28"/>
        <end position="41"/>
    </location>
</feature>
<feature type="short sequence motif" description="Switch 2" evidence="3">
    <location>
        <begin position="67"/>
        <end position="82"/>
    </location>
</feature>
<feature type="binding site" evidence="3">
    <location>
        <position position="17"/>
    </location>
    <ligand>
        <name>GTP</name>
        <dbReference type="ChEBI" id="CHEBI:37565"/>
    </ligand>
</feature>
<feature type="binding site" evidence="3">
    <location>
        <position position="18"/>
    </location>
    <ligand>
        <name>GTP</name>
        <dbReference type="ChEBI" id="CHEBI:37565"/>
    </ligand>
</feature>
<feature type="binding site" evidence="3">
    <location>
        <position position="19"/>
    </location>
    <ligand>
        <name>GTP</name>
        <dbReference type="ChEBI" id="CHEBI:37565"/>
    </ligand>
</feature>
<feature type="binding site" evidence="3">
    <location>
        <position position="20"/>
    </location>
    <ligand>
        <name>GTP</name>
        <dbReference type="ChEBI" id="CHEBI:37565"/>
    </ligand>
</feature>
<feature type="binding site" evidence="3">
    <location>
        <position position="21"/>
    </location>
    <ligand>
        <name>GTP</name>
        <dbReference type="ChEBI" id="CHEBI:37565"/>
    </ligand>
</feature>
<feature type="binding site" evidence="3">
    <location>
        <position position="22"/>
    </location>
    <ligand>
        <name>GTP</name>
        <dbReference type="ChEBI" id="CHEBI:37565"/>
    </ligand>
</feature>
<feature type="binding site" evidence="3">
    <location>
        <position position="22"/>
    </location>
    <ligand>
        <name>Mg(2+)</name>
        <dbReference type="ChEBI" id="CHEBI:18420"/>
    </ligand>
</feature>
<feature type="binding site" evidence="3">
    <location>
        <position position="23"/>
    </location>
    <ligand>
        <name>GTP</name>
        <dbReference type="ChEBI" id="CHEBI:37565"/>
    </ligand>
</feature>
<feature type="binding site" evidence="3">
    <location>
        <position position="34"/>
    </location>
    <ligand>
        <name>GTP</name>
        <dbReference type="ChEBI" id="CHEBI:37565"/>
    </ligand>
</feature>
<feature type="binding site" evidence="3">
    <location>
        <position position="35"/>
    </location>
    <ligand>
        <name>GTP</name>
        <dbReference type="ChEBI" id="CHEBI:37565"/>
    </ligand>
</feature>
<feature type="binding site" evidence="3">
    <location>
        <position position="37"/>
    </location>
    <ligand>
        <name>GTP</name>
        <dbReference type="ChEBI" id="CHEBI:37565"/>
    </ligand>
</feature>
<feature type="binding site" evidence="3">
    <location>
        <position position="40"/>
    </location>
    <ligand>
        <name>GTP</name>
        <dbReference type="ChEBI" id="CHEBI:37565"/>
    </ligand>
</feature>
<feature type="binding site" evidence="3">
    <location>
        <position position="40"/>
    </location>
    <ligand>
        <name>Mg(2+)</name>
        <dbReference type="ChEBI" id="CHEBI:18420"/>
    </ligand>
</feature>
<feature type="binding site" evidence="3">
    <location>
        <position position="63"/>
    </location>
    <ligand>
        <name>Mg(2+)</name>
        <dbReference type="ChEBI" id="CHEBI:18420"/>
    </ligand>
</feature>
<feature type="binding site" evidence="3">
    <location>
        <position position="66"/>
    </location>
    <ligand>
        <name>GTP</name>
        <dbReference type="ChEBI" id="CHEBI:37565"/>
    </ligand>
</feature>
<feature type="binding site" evidence="3">
    <location>
        <position position="125"/>
    </location>
    <ligand>
        <name>GTP</name>
        <dbReference type="ChEBI" id="CHEBI:37565"/>
    </ligand>
</feature>
<feature type="binding site" evidence="3">
    <location>
        <position position="126"/>
    </location>
    <ligand>
        <name>GTP</name>
        <dbReference type="ChEBI" id="CHEBI:37565"/>
    </ligand>
</feature>
<feature type="binding site" evidence="3">
    <location>
        <position position="128"/>
    </location>
    <ligand>
        <name>GTP</name>
        <dbReference type="ChEBI" id="CHEBI:37565"/>
    </ligand>
</feature>
<feature type="binding site" evidence="3">
    <location>
        <position position="156"/>
    </location>
    <ligand>
        <name>GTP</name>
        <dbReference type="ChEBI" id="CHEBI:37565"/>
    </ligand>
</feature>
<feature type="binding site" evidence="3">
    <location>
        <position position="157"/>
    </location>
    <ligand>
        <name>GTP</name>
        <dbReference type="ChEBI" id="CHEBI:37565"/>
    </ligand>
</feature>
<feature type="modified residue" description="N-acetylthreonine" evidence="3">
    <location>
        <position position="2"/>
    </location>
</feature>
<feature type="modified residue" description="Phosphoserine" evidence="3">
    <location>
        <position position="72"/>
    </location>
</feature>
<feature type="modified residue" description="Cysteine methyl ester" evidence="1">
    <location>
        <position position="207"/>
    </location>
</feature>
<feature type="lipid moiety-binding region" description="S-geranylgeranyl cysteine" evidence="1">
    <location>
        <position position="205"/>
    </location>
</feature>
<feature type="lipid moiety-binding region" description="S-geranylgeranyl cysteine" evidence="1">
    <location>
        <position position="207"/>
    </location>
</feature>
<feature type="cross-link" description="Glycyl lysine isopeptide (Lys-Gly) (interchain with G-Cter in ubiquitin)" evidence="3">
    <location>
        <position position="191"/>
    </location>
</feature>
<feature type="cross-link" description="Glycyl lysine isopeptide (Lys-Gly) (interchain with G-Cter in ubiquitin)" evidence="3">
    <location>
        <position position="194"/>
    </location>
</feature>
<name>RAB7A_CANLF</name>
<gene>
    <name type="primary">RAB7A</name>
    <name type="synonym">RAB7</name>
</gene>
<protein>
    <recommendedName>
        <fullName>Ras-related protein Rab-7a</fullName>
        <ecNumber evidence="3">3.6.5.2</ecNumber>
    </recommendedName>
</protein>
<dbReference type="EC" id="3.6.5.2" evidence="3"/>
<dbReference type="EMBL" id="M35522">
    <property type="protein sequence ID" value="AAA30890.1"/>
    <property type="molecule type" value="mRNA"/>
</dbReference>
<dbReference type="PIR" id="B30413">
    <property type="entry name" value="B30413"/>
</dbReference>
<dbReference type="RefSeq" id="NP_001003316.1">
    <property type="nucleotide sequence ID" value="NM_001003316.1"/>
</dbReference>
<dbReference type="RefSeq" id="XP_005632072.1">
    <property type="nucleotide sequence ID" value="XM_005632015.1"/>
</dbReference>
<dbReference type="RefSeq" id="XP_038282303.1">
    <property type="nucleotide sequence ID" value="XM_038426375.1"/>
</dbReference>
<dbReference type="SMR" id="P18067"/>
<dbReference type="BioGRID" id="139920">
    <property type="interactions" value="4"/>
</dbReference>
<dbReference type="DIP" id="DIP-61531N"/>
<dbReference type="FunCoup" id="P18067">
    <property type="interactions" value="3002"/>
</dbReference>
<dbReference type="IntAct" id="P18067">
    <property type="interactions" value="10"/>
</dbReference>
<dbReference type="MINT" id="P18067"/>
<dbReference type="STRING" id="9615.ENSCAFP00000043782"/>
<dbReference type="BindingDB" id="P18067"/>
<dbReference type="SwissPalm" id="P18067"/>
<dbReference type="PaxDb" id="9612-ENSCAFP00000034211"/>
<dbReference type="Ensembl" id="ENSCAFT00000060815.2">
    <property type="protein sequence ID" value="ENSCAFP00000043782.2"/>
    <property type="gene ID" value="ENSCAFG00000004157.5"/>
</dbReference>
<dbReference type="Ensembl" id="ENSCAFT00030025595.1">
    <property type="protein sequence ID" value="ENSCAFP00030022348.1"/>
    <property type="gene ID" value="ENSCAFG00030013725.1"/>
</dbReference>
<dbReference type="Ensembl" id="ENSCAFT00040048535.1">
    <property type="protein sequence ID" value="ENSCAFP00040042399.1"/>
    <property type="gene ID" value="ENSCAFG00040025936.1"/>
</dbReference>
<dbReference type="Ensembl" id="ENSCAFT00845034249.1">
    <property type="protein sequence ID" value="ENSCAFP00845026809.1"/>
    <property type="gene ID" value="ENSCAFG00845019242.1"/>
</dbReference>
<dbReference type="GeneID" id="404007"/>
<dbReference type="KEGG" id="cfa:404007"/>
<dbReference type="CTD" id="7879"/>
<dbReference type="VEuPathDB" id="HostDB:ENSCAFG00845019242"/>
<dbReference type="VGNC" id="VGNC:45293">
    <property type="gene designation" value="RAB7A"/>
</dbReference>
<dbReference type="eggNOG" id="KOG0394">
    <property type="taxonomic scope" value="Eukaryota"/>
</dbReference>
<dbReference type="GeneTree" id="ENSGT00940000155864"/>
<dbReference type="HOGENOM" id="CLU_041217_10_6_1"/>
<dbReference type="InParanoid" id="P18067"/>
<dbReference type="OMA" id="TSWKDEF"/>
<dbReference type="OrthoDB" id="1436450at2759"/>
<dbReference type="TreeFam" id="TF105605"/>
<dbReference type="Reactome" id="R-CFA-2132295">
    <property type="pathway name" value="MHC class II antigen presentation"/>
</dbReference>
<dbReference type="Reactome" id="R-CFA-6798695">
    <property type="pathway name" value="Neutrophil degranulation"/>
</dbReference>
<dbReference type="Reactome" id="R-CFA-8854214">
    <property type="pathway name" value="TBC/RABGAPs"/>
</dbReference>
<dbReference type="Reactome" id="R-CFA-8873719">
    <property type="pathway name" value="RAB geranylgeranylation"/>
</dbReference>
<dbReference type="Reactome" id="R-CFA-8876198">
    <property type="pathway name" value="RAB GEFs exchange GTP for GDP on RABs"/>
</dbReference>
<dbReference type="Reactome" id="R-CFA-9013148">
    <property type="pathway name" value="CDC42 GTPase cycle"/>
</dbReference>
<dbReference type="Reactome" id="R-CFA-9013149">
    <property type="pathway name" value="RAC1 GTPase cycle"/>
</dbReference>
<dbReference type="Reactome" id="R-CFA-9013404">
    <property type="pathway name" value="RAC2 GTPase cycle"/>
</dbReference>
<dbReference type="Reactome" id="R-CFA-9013405">
    <property type="pathway name" value="RHOD GTPase cycle"/>
</dbReference>
<dbReference type="Reactome" id="R-CFA-9013406">
    <property type="pathway name" value="RHOQ GTPase cycle"/>
</dbReference>
<dbReference type="Reactome" id="R-CFA-9013407">
    <property type="pathway name" value="RHOH GTPase cycle"/>
</dbReference>
<dbReference type="Reactome" id="R-CFA-9013408">
    <property type="pathway name" value="RHOG GTPase cycle"/>
</dbReference>
<dbReference type="Reactome" id="R-CFA-9013423">
    <property type="pathway name" value="RAC3 GTPase cycle"/>
</dbReference>
<dbReference type="Reactome" id="R-CFA-9035034">
    <property type="pathway name" value="RHOF GTPase cycle"/>
</dbReference>
<dbReference type="PRO" id="PR:P18067"/>
<dbReference type="Proteomes" id="UP000002254">
    <property type="component" value="Chromosome 20"/>
</dbReference>
<dbReference type="Proteomes" id="UP000694429">
    <property type="component" value="Chromosome 20"/>
</dbReference>
<dbReference type="Proteomes" id="UP000694542">
    <property type="component" value="Chromosome 20"/>
</dbReference>
<dbReference type="Proteomes" id="UP000805418">
    <property type="component" value="Chromosome 20"/>
</dbReference>
<dbReference type="GO" id="GO:0000421">
    <property type="term" value="C:autophagosome membrane"/>
    <property type="evidence" value="ECO:0007669"/>
    <property type="project" value="UniProtKB-SubCell"/>
</dbReference>
<dbReference type="GO" id="GO:0005829">
    <property type="term" value="C:cytosol"/>
    <property type="evidence" value="ECO:0000250"/>
    <property type="project" value="GO_Central"/>
</dbReference>
<dbReference type="GO" id="GO:0070382">
    <property type="term" value="C:exocytic vesicle"/>
    <property type="evidence" value="ECO:0000314"/>
    <property type="project" value="CAFA"/>
</dbReference>
<dbReference type="GO" id="GO:0005770">
    <property type="term" value="C:late endosome"/>
    <property type="evidence" value="ECO:0000250"/>
    <property type="project" value="UniProtKB"/>
</dbReference>
<dbReference type="GO" id="GO:0031902">
    <property type="term" value="C:late endosome membrane"/>
    <property type="evidence" value="ECO:0000250"/>
    <property type="project" value="GO_Central"/>
</dbReference>
<dbReference type="GO" id="GO:0005811">
    <property type="term" value="C:lipid droplet"/>
    <property type="evidence" value="ECO:0000250"/>
    <property type="project" value="GO_Central"/>
</dbReference>
<dbReference type="GO" id="GO:0005765">
    <property type="term" value="C:lysosomal membrane"/>
    <property type="evidence" value="ECO:0007669"/>
    <property type="project" value="UniProtKB-SubCell"/>
</dbReference>
<dbReference type="GO" id="GO:0005764">
    <property type="term" value="C:lysosome"/>
    <property type="evidence" value="ECO:0000318"/>
    <property type="project" value="GO_Central"/>
</dbReference>
<dbReference type="GO" id="GO:0033162">
    <property type="term" value="C:melanosome membrane"/>
    <property type="evidence" value="ECO:0007669"/>
    <property type="project" value="UniProtKB-SubCell"/>
</dbReference>
<dbReference type="GO" id="GO:0031966">
    <property type="term" value="C:mitochondrial membrane"/>
    <property type="evidence" value="ECO:0007669"/>
    <property type="project" value="UniProtKB-SubCell"/>
</dbReference>
<dbReference type="GO" id="GO:0005739">
    <property type="term" value="C:mitochondrion"/>
    <property type="evidence" value="ECO:0000250"/>
    <property type="project" value="UniProtKB"/>
</dbReference>
<dbReference type="GO" id="GO:0045335">
    <property type="term" value="C:phagocytic vesicle"/>
    <property type="evidence" value="ECO:0000250"/>
    <property type="project" value="UniProtKB"/>
</dbReference>
<dbReference type="GO" id="GO:0030670">
    <property type="term" value="C:phagocytic vesicle membrane"/>
    <property type="evidence" value="ECO:0007669"/>
    <property type="project" value="UniProtKB-SubCell"/>
</dbReference>
<dbReference type="GO" id="GO:0030672">
    <property type="term" value="C:synaptic vesicle membrane"/>
    <property type="evidence" value="ECO:0000314"/>
    <property type="project" value="SynGO-UCL"/>
</dbReference>
<dbReference type="GO" id="GO:0003925">
    <property type="term" value="F:G protein activity"/>
    <property type="evidence" value="ECO:0007669"/>
    <property type="project" value="UniProtKB-EC"/>
</dbReference>
<dbReference type="GO" id="GO:0005525">
    <property type="term" value="F:GTP binding"/>
    <property type="evidence" value="ECO:0007669"/>
    <property type="project" value="UniProtKB-KW"/>
</dbReference>
<dbReference type="GO" id="GO:0045022">
    <property type="term" value="P:early endosome to late endosome transport"/>
    <property type="evidence" value="ECO:0000315"/>
    <property type="project" value="UniProtKB"/>
</dbReference>
<dbReference type="GO" id="GO:0008333">
    <property type="term" value="P:endosome to lysosome transport"/>
    <property type="evidence" value="ECO:0000318"/>
    <property type="project" value="GO_Central"/>
</dbReference>
<dbReference type="GO" id="GO:0099638">
    <property type="term" value="P:endosome to plasma membrane protein transport"/>
    <property type="evidence" value="ECO:0000250"/>
    <property type="project" value="UniProtKB"/>
</dbReference>
<dbReference type="GO" id="GO:0007174">
    <property type="term" value="P:epidermal growth factor catabolic process"/>
    <property type="evidence" value="ECO:0000315"/>
    <property type="project" value="UniProtKB"/>
</dbReference>
<dbReference type="GO" id="GO:0016042">
    <property type="term" value="P:lipid catabolic process"/>
    <property type="evidence" value="ECO:0007669"/>
    <property type="project" value="UniProtKB-KW"/>
</dbReference>
<dbReference type="GO" id="GO:0061724">
    <property type="term" value="P:lipophagy"/>
    <property type="evidence" value="ECO:0000250"/>
    <property type="project" value="GO_Central"/>
</dbReference>
<dbReference type="GO" id="GO:0090383">
    <property type="term" value="P:phagosome acidification"/>
    <property type="evidence" value="ECO:0000250"/>
    <property type="project" value="UniProtKB"/>
</dbReference>
<dbReference type="GO" id="GO:0090385">
    <property type="term" value="P:phagosome-lysosome fusion"/>
    <property type="evidence" value="ECO:0000250"/>
    <property type="project" value="UniProtKB"/>
</dbReference>
<dbReference type="CDD" id="cd01862">
    <property type="entry name" value="Rab7"/>
    <property type="match status" value="1"/>
</dbReference>
<dbReference type="FunFam" id="3.40.50.300:FF:000086">
    <property type="entry name" value="Ras-related small GTPase"/>
    <property type="match status" value="1"/>
</dbReference>
<dbReference type="Gene3D" id="3.40.50.300">
    <property type="entry name" value="P-loop containing nucleotide triphosphate hydrolases"/>
    <property type="match status" value="1"/>
</dbReference>
<dbReference type="InterPro" id="IPR027417">
    <property type="entry name" value="P-loop_NTPase"/>
</dbReference>
<dbReference type="InterPro" id="IPR005225">
    <property type="entry name" value="Small_GTP-bd"/>
</dbReference>
<dbReference type="InterPro" id="IPR001806">
    <property type="entry name" value="Small_GTPase"/>
</dbReference>
<dbReference type="NCBIfam" id="TIGR00231">
    <property type="entry name" value="small_GTP"/>
    <property type="match status" value="1"/>
</dbReference>
<dbReference type="PANTHER" id="PTHR47981">
    <property type="entry name" value="RAB FAMILY"/>
    <property type="match status" value="1"/>
</dbReference>
<dbReference type="PANTHER" id="PTHR47981:SF13">
    <property type="entry name" value="RAS-RELATED PROTEIN RAB-7A"/>
    <property type="match status" value="1"/>
</dbReference>
<dbReference type="Pfam" id="PF00071">
    <property type="entry name" value="Ras"/>
    <property type="match status" value="1"/>
</dbReference>
<dbReference type="PRINTS" id="PR00449">
    <property type="entry name" value="RASTRNSFRMNG"/>
</dbReference>
<dbReference type="SMART" id="SM00175">
    <property type="entry name" value="RAB"/>
    <property type="match status" value="1"/>
</dbReference>
<dbReference type="SMART" id="SM00176">
    <property type="entry name" value="RAN"/>
    <property type="match status" value="1"/>
</dbReference>
<dbReference type="SMART" id="SM00173">
    <property type="entry name" value="RAS"/>
    <property type="match status" value="1"/>
</dbReference>
<dbReference type="SMART" id="SM00174">
    <property type="entry name" value="RHO"/>
    <property type="match status" value="1"/>
</dbReference>
<dbReference type="SUPFAM" id="SSF52540">
    <property type="entry name" value="P-loop containing nucleoside triphosphate hydrolases"/>
    <property type="match status" value="1"/>
</dbReference>
<dbReference type="PROSITE" id="PS51419">
    <property type="entry name" value="RAB"/>
    <property type="match status" value="1"/>
</dbReference>
<proteinExistence type="evidence at protein level"/>
<accession>P18067</accession>